<protein>
    <recommendedName>
        <fullName>DNA polymerase delta catalytic subunit</fullName>
        <ecNumber>2.7.7.7</ecNumber>
    </recommendedName>
</protein>
<evidence type="ECO:0000250" key="1"/>
<evidence type="ECO:0000256" key="2">
    <source>
        <dbReference type="SAM" id="MobiDB-lite"/>
    </source>
</evidence>
<evidence type="ECO:0000305" key="3"/>
<gene>
    <name type="ORF">F10C2.4</name>
</gene>
<reference key="1">
    <citation type="journal article" date="1998" name="Science">
        <title>Genome sequence of the nematode C. elegans: a platform for investigating biology.</title>
        <authorList>
            <consortium name="The C. elegans sequencing consortium"/>
        </authorList>
    </citation>
    <scope>NUCLEOTIDE SEQUENCE [LARGE SCALE GENOMIC DNA]</scope>
    <source>
        <strain>Bristol N2</strain>
    </source>
</reference>
<organism>
    <name type="scientific">Caenorhabditis elegans</name>
    <dbReference type="NCBI Taxonomy" id="6239"/>
    <lineage>
        <taxon>Eukaryota</taxon>
        <taxon>Metazoa</taxon>
        <taxon>Ecdysozoa</taxon>
        <taxon>Nematoda</taxon>
        <taxon>Chromadorea</taxon>
        <taxon>Rhabditida</taxon>
        <taxon>Rhabditina</taxon>
        <taxon>Rhabditomorpha</taxon>
        <taxon>Rhabditoidea</taxon>
        <taxon>Rhabditidae</taxon>
        <taxon>Peloderinae</taxon>
        <taxon>Caenorhabditis</taxon>
    </lineage>
</organism>
<comment type="function">
    <text evidence="1">Possesses two enzymatic activities: DNA synthesis (polymerase) and an exonucleolytic activity that degrades single stranded DNA in the 3'- to 5'-direction. Required with its accessory proteins (proliferating cell nuclear antigen (PCNA) and replication factor C (RFC) or activator 1) for leading strand synthesis. Also involved in completing Okazaki fragments initiated by the DNA polymerase alpha/primase complex (By similarity).</text>
</comment>
<comment type="catalytic activity">
    <reaction>
        <text>DNA(n) + a 2'-deoxyribonucleoside 5'-triphosphate = DNA(n+1) + diphosphate</text>
        <dbReference type="Rhea" id="RHEA:22508"/>
        <dbReference type="Rhea" id="RHEA-COMP:17339"/>
        <dbReference type="Rhea" id="RHEA-COMP:17340"/>
        <dbReference type="ChEBI" id="CHEBI:33019"/>
        <dbReference type="ChEBI" id="CHEBI:61560"/>
        <dbReference type="ChEBI" id="CHEBI:173112"/>
        <dbReference type="EC" id="2.7.7.7"/>
    </reaction>
</comment>
<comment type="cofactor">
    <cofactor evidence="1">
        <name>[4Fe-4S] cluster</name>
        <dbReference type="ChEBI" id="CHEBI:49883"/>
    </cofactor>
    <text evidence="1">Binds 1 [4Fe-4S] cluster.</text>
</comment>
<comment type="subunit">
    <text evidence="1">Heterodimer with subunits of 125 kDa and 50 kDa. The 125 kDa subunit contains the polymerase active site and most likely the active site for the 3'-5' exonuclease activity (By similarity).</text>
</comment>
<comment type="subcellular location">
    <subcellularLocation>
        <location evidence="1">Nucleus</location>
    </subcellularLocation>
</comment>
<comment type="domain">
    <text evidence="1">The CysB motif binds 1 4Fe-4S cluster and is required for the formation of polymerase complexes.</text>
</comment>
<comment type="miscellaneous">
    <text>In eukaryotes there are five DNA polymerases: alpha, beta, gamma, delta, and epsilon which are responsible for different reactions of DNA synthesis.</text>
</comment>
<comment type="similarity">
    <text evidence="3">Belongs to the DNA polymerase type-B family.</text>
</comment>
<proteinExistence type="inferred from homology"/>
<feature type="chain" id="PRO_0000046446" description="DNA polymerase delta catalytic subunit">
    <location>
        <begin position="1"/>
        <end position="1081"/>
    </location>
</feature>
<feature type="zinc finger region" description="CysA-type">
    <location>
        <begin position="981"/>
        <end position="1001"/>
    </location>
</feature>
<feature type="region of interest" description="Disordered" evidence="2">
    <location>
        <begin position="1"/>
        <end position="22"/>
    </location>
</feature>
<feature type="short sequence motif" description="CysB motif">
    <location>
        <begin position="1030"/>
        <end position="1048"/>
    </location>
</feature>
<feature type="binding site" evidence="1">
    <location>
        <position position="981"/>
    </location>
    <ligand>
        <name>Zn(2+)</name>
        <dbReference type="ChEBI" id="CHEBI:29105"/>
    </ligand>
</feature>
<feature type="binding site" evidence="1">
    <location>
        <position position="984"/>
    </location>
    <ligand>
        <name>Zn(2+)</name>
        <dbReference type="ChEBI" id="CHEBI:29105"/>
    </ligand>
</feature>
<feature type="binding site" evidence="1">
    <location>
        <position position="998"/>
    </location>
    <ligand>
        <name>Zn(2+)</name>
        <dbReference type="ChEBI" id="CHEBI:29105"/>
    </ligand>
</feature>
<feature type="binding site" evidence="1">
    <location>
        <position position="1001"/>
    </location>
    <ligand>
        <name>Zn(2+)</name>
        <dbReference type="ChEBI" id="CHEBI:29105"/>
    </ligand>
</feature>
<feature type="binding site" evidence="1">
    <location>
        <position position="1030"/>
    </location>
    <ligand>
        <name>[4Fe-4S] cluster</name>
        <dbReference type="ChEBI" id="CHEBI:49883"/>
    </ligand>
</feature>
<feature type="binding site" evidence="1">
    <location>
        <position position="1033"/>
    </location>
    <ligand>
        <name>[4Fe-4S] cluster</name>
        <dbReference type="ChEBI" id="CHEBI:49883"/>
    </ligand>
</feature>
<feature type="binding site" evidence="1">
    <location>
        <position position="1043"/>
    </location>
    <ligand>
        <name>[4Fe-4S] cluster</name>
        <dbReference type="ChEBI" id="CHEBI:49883"/>
    </ligand>
</feature>
<feature type="binding site" evidence="1">
    <location>
        <position position="1048"/>
    </location>
    <ligand>
        <name>[4Fe-4S] cluster</name>
        <dbReference type="ChEBI" id="CHEBI:49883"/>
    </ligand>
</feature>
<accession>P90829</accession>
<name>DPOD1_CAEEL</name>
<dbReference type="EC" id="2.7.7.7"/>
<dbReference type="EMBL" id="Z81497">
    <property type="protein sequence ID" value="CAB04077.1"/>
    <property type="molecule type" value="Genomic_DNA"/>
</dbReference>
<dbReference type="PIR" id="T20698">
    <property type="entry name" value="T20698"/>
</dbReference>
<dbReference type="RefSeq" id="NP_506017.1">
    <property type="nucleotide sequence ID" value="NM_073616.4"/>
</dbReference>
<dbReference type="SMR" id="P90829"/>
<dbReference type="BioGRID" id="44675">
    <property type="interactions" value="22"/>
</dbReference>
<dbReference type="FunCoup" id="P90829">
    <property type="interactions" value="2224"/>
</dbReference>
<dbReference type="STRING" id="6239.F10C2.4.1"/>
<dbReference type="iPTMnet" id="P90829"/>
<dbReference type="PaxDb" id="6239-F10C2.4"/>
<dbReference type="PeptideAtlas" id="P90829"/>
<dbReference type="EnsemblMetazoa" id="F10C2.4.1">
    <property type="protein sequence ID" value="F10C2.4.1"/>
    <property type="gene ID" value="WBGene00008645"/>
</dbReference>
<dbReference type="GeneID" id="179652"/>
<dbReference type="KEGG" id="cel:CELE_F10C2.4"/>
<dbReference type="UCSC" id="F10C2.4">
    <property type="organism name" value="c. elegans"/>
</dbReference>
<dbReference type="AGR" id="WB:WBGene00008645"/>
<dbReference type="CTD" id="179652"/>
<dbReference type="WormBase" id="F10C2.4">
    <property type="protein sequence ID" value="CE09308"/>
    <property type="gene ID" value="WBGene00008645"/>
</dbReference>
<dbReference type="eggNOG" id="KOG0969">
    <property type="taxonomic scope" value="Eukaryota"/>
</dbReference>
<dbReference type="GeneTree" id="ENSGT00560000077365"/>
<dbReference type="HOGENOM" id="CLU_000203_2_0_1"/>
<dbReference type="InParanoid" id="P90829"/>
<dbReference type="OMA" id="CNNCRPR"/>
<dbReference type="OrthoDB" id="2414538at2759"/>
<dbReference type="PhylomeDB" id="P90829"/>
<dbReference type="Reactome" id="R-CEL-110314">
    <property type="pathway name" value="Recognition of DNA damage by PCNA-containing replication complex"/>
</dbReference>
<dbReference type="Reactome" id="R-CEL-5651801">
    <property type="pathway name" value="PCNA-Dependent Long Patch Base Excision Repair"/>
</dbReference>
<dbReference type="Reactome" id="R-CEL-5656169">
    <property type="pathway name" value="Termination of translesion DNA synthesis"/>
</dbReference>
<dbReference type="Reactome" id="R-CEL-5696397">
    <property type="pathway name" value="Gap-filling DNA repair synthesis and ligation in GG-NER"/>
</dbReference>
<dbReference type="Reactome" id="R-CEL-5696400">
    <property type="pathway name" value="Dual Incision in GG-NER"/>
</dbReference>
<dbReference type="Reactome" id="R-CEL-6782135">
    <property type="pathway name" value="Dual incision in TC-NER"/>
</dbReference>
<dbReference type="Reactome" id="R-CEL-6782210">
    <property type="pathway name" value="Gap-filling DNA repair synthesis and ligation in TC-NER"/>
</dbReference>
<dbReference type="Reactome" id="R-CEL-69091">
    <property type="pathway name" value="Polymerase switching"/>
</dbReference>
<dbReference type="Reactome" id="R-CEL-69166">
    <property type="pathway name" value="Removal of the Flap Intermediate"/>
</dbReference>
<dbReference type="Reactome" id="R-CEL-69183">
    <property type="pathway name" value="Processive synthesis on the lagging strand"/>
</dbReference>
<dbReference type="PRO" id="PR:P90829"/>
<dbReference type="Proteomes" id="UP000001940">
    <property type="component" value="Chromosome V"/>
</dbReference>
<dbReference type="Bgee" id="WBGene00008645">
    <property type="expression patterns" value="Expressed in germ line (C elegans) and 4 other cell types or tissues"/>
</dbReference>
<dbReference type="GO" id="GO:0043625">
    <property type="term" value="C:delta DNA polymerase complex"/>
    <property type="evidence" value="ECO:0000318"/>
    <property type="project" value="GO_Central"/>
</dbReference>
<dbReference type="GO" id="GO:0008296">
    <property type="term" value="F:3'-5'-DNA exonuclease activity"/>
    <property type="evidence" value="ECO:0000318"/>
    <property type="project" value="GO_Central"/>
</dbReference>
<dbReference type="GO" id="GO:0051539">
    <property type="term" value="F:4 iron, 4 sulfur cluster binding"/>
    <property type="evidence" value="ECO:0007669"/>
    <property type="project" value="UniProtKB-KW"/>
</dbReference>
<dbReference type="GO" id="GO:0003677">
    <property type="term" value="F:DNA binding"/>
    <property type="evidence" value="ECO:0007669"/>
    <property type="project" value="UniProtKB-KW"/>
</dbReference>
<dbReference type="GO" id="GO:0003887">
    <property type="term" value="F:DNA-directed DNA polymerase activity"/>
    <property type="evidence" value="ECO:0000318"/>
    <property type="project" value="GO_Central"/>
</dbReference>
<dbReference type="GO" id="GO:0000166">
    <property type="term" value="F:nucleotide binding"/>
    <property type="evidence" value="ECO:0007669"/>
    <property type="project" value="InterPro"/>
</dbReference>
<dbReference type="GO" id="GO:0008270">
    <property type="term" value="F:zinc ion binding"/>
    <property type="evidence" value="ECO:0007669"/>
    <property type="project" value="UniProtKB-KW"/>
</dbReference>
<dbReference type="GO" id="GO:0006287">
    <property type="term" value="P:base-excision repair, gap-filling"/>
    <property type="evidence" value="ECO:0000318"/>
    <property type="project" value="GO_Central"/>
</dbReference>
<dbReference type="GO" id="GO:0045004">
    <property type="term" value="P:DNA replication proofreading"/>
    <property type="evidence" value="ECO:0000318"/>
    <property type="project" value="GO_Central"/>
</dbReference>
<dbReference type="GO" id="GO:0006261">
    <property type="term" value="P:DNA-templated DNA replication"/>
    <property type="evidence" value="ECO:0000318"/>
    <property type="project" value="GO_Central"/>
</dbReference>
<dbReference type="GO" id="GO:0006297">
    <property type="term" value="P:nucleotide-excision repair, DNA gap filling"/>
    <property type="evidence" value="ECO:0000318"/>
    <property type="project" value="GO_Central"/>
</dbReference>
<dbReference type="CDD" id="cd05777">
    <property type="entry name" value="DNA_polB_delta_exo"/>
    <property type="match status" value="1"/>
</dbReference>
<dbReference type="CDD" id="cd05533">
    <property type="entry name" value="POLBc_delta"/>
    <property type="match status" value="1"/>
</dbReference>
<dbReference type="FunFam" id="1.10.132.60:FF:000001">
    <property type="entry name" value="DNA polymerase"/>
    <property type="match status" value="1"/>
</dbReference>
<dbReference type="FunFam" id="1.10.287.690:FF:000001">
    <property type="entry name" value="DNA polymerase"/>
    <property type="match status" value="1"/>
</dbReference>
<dbReference type="FunFam" id="2.40.50.730:FF:000011">
    <property type="entry name" value="DNA polymerase"/>
    <property type="match status" value="1"/>
</dbReference>
<dbReference type="FunFam" id="3.30.420.10:FF:000004">
    <property type="entry name" value="DNA polymerase"/>
    <property type="match status" value="1"/>
</dbReference>
<dbReference type="Gene3D" id="2.40.50.730">
    <property type="match status" value="2"/>
</dbReference>
<dbReference type="Gene3D" id="1.10.132.60">
    <property type="entry name" value="DNA polymerase family B, C-terminal domain"/>
    <property type="match status" value="1"/>
</dbReference>
<dbReference type="Gene3D" id="1.10.287.690">
    <property type="entry name" value="Helix hairpin bin"/>
    <property type="match status" value="1"/>
</dbReference>
<dbReference type="Gene3D" id="3.90.1600.10">
    <property type="entry name" value="Palm domain of DNA polymerase"/>
    <property type="match status" value="1"/>
</dbReference>
<dbReference type="Gene3D" id="3.30.420.10">
    <property type="entry name" value="Ribonuclease H-like superfamily/Ribonuclease H"/>
    <property type="match status" value="1"/>
</dbReference>
<dbReference type="InterPro" id="IPR006172">
    <property type="entry name" value="DNA-dir_DNA_pol_B"/>
</dbReference>
<dbReference type="InterPro" id="IPR017964">
    <property type="entry name" value="DNA-dir_DNA_pol_B_CS"/>
</dbReference>
<dbReference type="InterPro" id="IPR006133">
    <property type="entry name" value="DNA-dir_DNA_pol_B_exonuc"/>
</dbReference>
<dbReference type="InterPro" id="IPR006134">
    <property type="entry name" value="DNA-dir_DNA_pol_B_multi_dom"/>
</dbReference>
<dbReference type="InterPro" id="IPR043502">
    <property type="entry name" value="DNA/RNA_pol_sf"/>
</dbReference>
<dbReference type="InterPro" id="IPR042087">
    <property type="entry name" value="DNA_pol_B_thumb"/>
</dbReference>
<dbReference type="InterPro" id="IPR023211">
    <property type="entry name" value="DNA_pol_palm_dom_sf"/>
</dbReference>
<dbReference type="InterPro" id="IPR050240">
    <property type="entry name" value="DNA_pol_type-B"/>
</dbReference>
<dbReference type="InterPro" id="IPR056435">
    <property type="entry name" value="DPOD/Z_N"/>
</dbReference>
<dbReference type="InterPro" id="IPR012337">
    <property type="entry name" value="RNaseH-like_sf"/>
</dbReference>
<dbReference type="InterPro" id="IPR036397">
    <property type="entry name" value="RNaseH_sf"/>
</dbReference>
<dbReference type="InterPro" id="IPR025687">
    <property type="entry name" value="Znf-C4pol"/>
</dbReference>
<dbReference type="NCBIfam" id="TIGR00592">
    <property type="entry name" value="pol2"/>
    <property type="match status" value="1"/>
</dbReference>
<dbReference type="PANTHER" id="PTHR10322">
    <property type="entry name" value="DNA POLYMERASE CATALYTIC SUBUNIT"/>
    <property type="match status" value="1"/>
</dbReference>
<dbReference type="PANTHER" id="PTHR10322:SF23">
    <property type="entry name" value="DNA POLYMERASE DELTA CATALYTIC SUBUNIT"/>
    <property type="match status" value="1"/>
</dbReference>
<dbReference type="Pfam" id="PF00136">
    <property type="entry name" value="DNA_pol_B"/>
    <property type="match status" value="1"/>
</dbReference>
<dbReference type="Pfam" id="PF03104">
    <property type="entry name" value="DNA_pol_B_exo1"/>
    <property type="match status" value="1"/>
</dbReference>
<dbReference type="Pfam" id="PF24055">
    <property type="entry name" value="POL3_N"/>
    <property type="match status" value="1"/>
</dbReference>
<dbReference type="Pfam" id="PF14260">
    <property type="entry name" value="zf-C4pol"/>
    <property type="match status" value="1"/>
</dbReference>
<dbReference type="PRINTS" id="PR00106">
    <property type="entry name" value="DNAPOLB"/>
</dbReference>
<dbReference type="SMART" id="SM00486">
    <property type="entry name" value="POLBc"/>
    <property type="match status" value="1"/>
</dbReference>
<dbReference type="SUPFAM" id="SSF56672">
    <property type="entry name" value="DNA/RNA polymerases"/>
    <property type="match status" value="1"/>
</dbReference>
<dbReference type="SUPFAM" id="SSF53098">
    <property type="entry name" value="Ribonuclease H-like"/>
    <property type="match status" value="1"/>
</dbReference>
<dbReference type="PROSITE" id="PS00116">
    <property type="entry name" value="DNA_POLYMERASE_B"/>
    <property type="match status" value="1"/>
</dbReference>
<sequence>MTSKRPGGSSFQPEVKRKRESDEFEQCYVSRFENELPSVPTIDKTGWARPAVDKDLGISKSIACQILEVETYHEDGSATSYDRTNVKLYGVTKSGNSICVIVTDYFPHFYFQAPQGFGVEHIGTAQSAICNMVAAAKRRGGSGQAQLPGKVVDNLVHVEIVHGENLYYFRGADTKVPFVKVSGSTEALHKARMELKNGVNLMGKGPVNVGNLYESNINVIVMFLAKTNIVGCGWIEIPAGKCRILSNSEKSSRCQIEVTVPVKNLIVHESDGEWAGIAPIRTLSLDIECIGRRGVFPEAIKDPIIQIANLVKIEGEAEPFVRNCFVLGTCAPVVGSNIIQCVNEKVLLEKWAEFVREVDPDIITGYNILNFDLPYILDRAKVLSLPQVSHLGRQKEKGSVVRDAAISSKQMGSRVNKSIDIHGRIIFDVLQVVLRDYKLRSYTLNSVSYQFLSEQKEDVEHNIIPDLQRGDEQTRRRLAQYCLKDAYLPLRLLDKLMSIINYIEMARVTGVPMNFLLTKGQQIKILSMMLRRCKQNNFFLPVIEANSGDGEGYEGATVIDPIRGFYNEPIATLDFASLYPSIMIAHNLCYTTLLKSPQGVENEDYIRTPSGQYFATKSKRRGLLPEILEDILAARKRAKNDMKNEKDEFKRMVYNGRQLALKISANSVYGFTGATVGKLPCLEISQSVTAFGRKMIDMTKLEVERIYKKGALDGKCPADAKVIYGDTDSVMVKFGVETVAQAMEIGLDAAKEVSKIFTPPIKLEFEKVYSPYLLINKKRYAGLYFTKPDVHDKMDCKGLETVRRDNCPLVAKVLGVCLEKLLIERDQQSALDFAKRTISDLLCNKIDISLLIISKELTKSGDKYQAKQAHVELAARMKKRDAGSAPRLGDRVPYVFVAAAKNVPAYERAEDPTFVLQNNIPLDTKHYLTNQLAKPLARIFEPILGDRAEKILVEGEHTRVRTVVQSKVGGLAAFTTKSATCLGCKSVLPRAESENAVCKHCEPKLPTIFASRMNTMHELENHFGRLWTECQNCAKTMQDKVNCSARDCPIYYMREKVRNELSEASAVIERFGDPCFQAPTK</sequence>
<keyword id="KW-0004">4Fe-4S</keyword>
<keyword id="KW-0235">DNA replication</keyword>
<keyword id="KW-0238">DNA-binding</keyword>
<keyword id="KW-0239">DNA-directed DNA polymerase</keyword>
<keyword id="KW-0269">Exonuclease</keyword>
<keyword id="KW-0378">Hydrolase</keyword>
<keyword id="KW-0408">Iron</keyword>
<keyword id="KW-0411">Iron-sulfur</keyword>
<keyword id="KW-0479">Metal-binding</keyword>
<keyword id="KW-0540">Nuclease</keyword>
<keyword id="KW-0548">Nucleotidyltransferase</keyword>
<keyword id="KW-0539">Nucleus</keyword>
<keyword id="KW-1185">Reference proteome</keyword>
<keyword id="KW-0808">Transferase</keyword>
<keyword id="KW-0862">Zinc</keyword>
<keyword id="KW-0863">Zinc-finger</keyword>